<proteinExistence type="inferred from homology"/>
<feature type="chain" id="PRO_1000185475" description="Nucleoside triphosphate/diphosphate phosphatase">
    <location>
        <begin position="1"/>
        <end position="177"/>
    </location>
</feature>
<feature type="active site" description="Proton donor" evidence="1">
    <location>
        <position position="23"/>
    </location>
</feature>
<feature type="binding site" evidence="1">
    <location>
        <position position="87"/>
    </location>
    <ligand>
        <name>Mg(2+)</name>
        <dbReference type="ChEBI" id="CHEBI:18420"/>
        <label>1</label>
    </ligand>
</feature>
<feature type="binding site" evidence="1">
    <location>
        <position position="103"/>
    </location>
    <ligand>
        <name>Mg(2+)</name>
        <dbReference type="ChEBI" id="CHEBI:18420"/>
        <label>1</label>
    </ligand>
</feature>
<feature type="binding site" evidence="1">
    <location>
        <position position="105"/>
    </location>
    <ligand>
        <name>Mg(2+)</name>
        <dbReference type="ChEBI" id="CHEBI:18420"/>
        <label>2</label>
    </ligand>
</feature>
<feature type="binding site" evidence="1">
    <location>
        <position position="107"/>
    </location>
    <ligand>
        <name>Mg(2+)</name>
        <dbReference type="ChEBI" id="CHEBI:18420"/>
        <label>1</label>
    </ligand>
</feature>
<feature type="binding site" evidence="1">
    <location>
        <position position="107"/>
    </location>
    <ligand>
        <name>Mg(2+)</name>
        <dbReference type="ChEBI" id="CHEBI:18420"/>
        <label>2</label>
    </ligand>
</feature>
<feature type="binding site" evidence="1">
    <location>
        <position position="120"/>
    </location>
    <ligand>
        <name>Mg(2+)</name>
        <dbReference type="ChEBI" id="CHEBI:18420"/>
        <label>2</label>
    </ligand>
</feature>
<feature type="binding site" evidence="1">
    <location>
        <position position="123"/>
    </location>
    <ligand>
        <name>Mg(2+)</name>
        <dbReference type="ChEBI" id="CHEBI:18420"/>
        <label>2</label>
    </ligand>
</feature>
<reference key="1">
    <citation type="journal article" date="2010" name="Genome Biol.">
        <title>Structure and dynamics of the pan-genome of Streptococcus pneumoniae and closely related species.</title>
        <authorList>
            <person name="Donati C."/>
            <person name="Hiller N.L."/>
            <person name="Tettelin H."/>
            <person name="Muzzi A."/>
            <person name="Croucher N.J."/>
            <person name="Angiuoli S.V."/>
            <person name="Oggioni M."/>
            <person name="Dunning Hotopp J.C."/>
            <person name="Hu F.Z."/>
            <person name="Riley D.R."/>
            <person name="Covacci A."/>
            <person name="Mitchell T.J."/>
            <person name="Bentley S.D."/>
            <person name="Kilian M."/>
            <person name="Ehrlich G.D."/>
            <person name="Rappuoli R."/>
            <person name="Moxon E.R."/>
            <person name="Masignani V."/>
        </authorList>
    </citation>
    <scope>NUCLEOTIDE SEQUENCE [LARGE SCALE GENOMIC DNA]</scope>
    <source>
        <strain>70585</strain>
    </source>
</reference>
<name>NTDP_STRP7</name>
<organism>
    <name type="scientific">Streptococcus pneumoniae (strain 70585)</name>
    <dbReference type="NCBI Taxonomy" id="488221"/>
    <lineage>
        <taxon>Bacteria</taxon>
        <taxon>Bacillati</taxon>
        <taxon>Bacillota</taxon>
        <taxon>Bacilli</taxon>
        <taxon>Lactobacillales</taxon>
        <taxon>Streptococcaceae</taxon>
        <taxon>Streptococcus</taxon>
    </lineage>
</organism>
<gene>
    <name type="ordered locus">SP70585_1984</name>
</gene>
<protein>
    <recommendedName>
        <fullName evidence="1">Nucleoside triphosphate/diphosphate phosphatase</fullName>
        <ecNumber evidence="1">3.6.1.15</ecNumber>
        <ecNumber evidence="1">3.6.1.6</ecNumber>
    </recommendedName>
</protein>
<dbReference type="EC" id="3.6.1.15" evidence="1"/>
<dbReference type="EC" id="3.6.1.6" evidence="1"/>
<dbReference type="EMBL" id="CP000918">
    <property type="protein sequence ID" value="ACO16917.1"/>
    <property type="molecule type" value="Genomic_DNA"/>
</dbReference>
<dbReference type="RefSeq" id="WP_000775321.1">
    <property type="nucleotide sequence ID" value="NC_012468.1"/>
</dbReference>
<dbReference type="SMR" id="C1C9H3"/>
<dbReference type="KEGG" id="snm:SP70585_1984"/>
<dbReference type="HOGENOM" id="CLU_109787_1_0_9"/>
<dbReference type="Proteomes" id="UP000002211">
    <property type="component" value="Chromosome"/>
</dbReference>
<dbReference type="GO" id="GO:0000287">
    <property type="term" value="F:magnesium ion binding"/>
    <property type="evidence" value="ECO:0007669"/>
    <property type="project" value="UniProtKB-UniRule"/>
</dbReference>
<dbReference type="GO" id="GO:0017110">
    <property type="term" value="F:nucleoside diphosphate phosphatase activity"/>
    <property type="evidence" value="ECO:0007669"/>
    <property type="project" value="UniProtKB-UniRule"/>
</dbReference>
<dbReference type="GO" id="GO:0017111">
    <property type="term" value="F:ribonucleoside triphosphate phosphatase activity"/>
    <property type="evidence" value="ECO:0007669"/>
    <property type="project" value="UniProtKB-UniRule"/>
</dbReference>
<dbReference type="Gene3D" id="2.40.380.10">
    <property type="entry name" value="FomD-like"/>
    <property type="match status" value="1"/>
</dbReference>
<dbReference type="HAMAP" id="MF_01568">
    <property type="entry name" value="Ntdp"/>
    <property type="match status" value="1"/>
</dbReference>
<dbReference type="InterPro" id="IPR007295">
    <property type="entry name" value="DUF402"/>
</dbReference>
<dbReference type="InterPro" id="IPR035930">
    <property type="entry name" value="FomD-like_sf"/>
</dbReference>
<dbReference type="InterPro" id="IPR050212">
    <property type="entry name" value="Ntdp-like"/>
</dbReference>
<dbReference type="InterPro" id="IPR016882">
    <property type="entry name" value="SA1684"/>
</dbReference>
<dbReference type="NCBIfam" id="NF010183">
    <property type="entry name" value="PRK13662.1"/>
    <property type="match status" value="1"/>
</dbReference>
<dbReference type="PANTHER" id="PTHR39159">
    <property type="match status" value="1"/>
</dbReference>
<dbReference type="PANTHER" id="PTHR39159:SF1">
    <property type="entry name" value="UPF0374 PROTEIN YGAC"/>
    <property type="match status" value="1"/>
</dbReference>
<dbReference type="Pfam" id="PF04167">
    <property type="entry name" value="DUF402"/>
    <property type="match status" value="1"/>
</dbReference>
<dbReference type="PIRSF" id="PIRSF028345">
    <property type="entry name" value="UCP028345"/>
    <property type="match status" value="1"/>
</dbReference>
<dbReference type="SUPFAM" id="SSF159234">
    <property type="entry name" value="FomD-like"/>
    <property type="match status" value="1"/>
</dbReference>
<evidence type="ECO:0000255" key="1">
    <source>
        <dbReference type="HAMAP-Rule" id="MF_01568"/>
    </source>
</evidence>
<accession>C1C9H3</accession>
<sequence length="177" mass="21338">MKLPKEGDFITIQSYKHDGSLHRTWRDTMVLKTTENAIIGVNDHTLVTESDGRRWVTREPAIVYFHKKYWFNIIAMIRDNGTSYYCNMASPYYLDEEALKYIDYDLDVKIFTDGEKRLLDVEEYERHKRKMNYSDDLDYILKEHVKILVDWINNGRGPFSEAYVNIWYKRYVELKNR</sequence>
<keyword id="KW-0378">Hydrolase</keyword>
<keyword id="KW-0460">Magnesium</keyword>
<keyword id="KW-0479">Metal-binding</keyword>
<comment type="function">
    <text evidence="1">Has nucleoside phosphatase activity towards nucleoside triphosphates and nucleoside diphosphates.</text>
</comment>
<comment type="catalytic activity">
    <reaction evidence="1">
        <text>a ribonucleoside 5'-triphosphate + H2O = a ribonucleoside 5'-diphosphate + phosphate + H(+)</text>
        <dbReference type="Rhea" id="RHEA:23680"/>
        <dbReference type="ChEBI" id="CHEBI:15377"/>
        <dbReference type="ChEBI" id="CHEBI:15378"/>
        <dbReference type="ChEBI" id="CHEBI:43474"/>
        <dbReference type="ChEBI" id="CHEBI:57930"/>
        <dbReference type="ChEBI" id="CHEBI:61557"/>
        <dbReference type="EC" id="3.6.1.15"/>
    </reaction>
</comment>
<comment type="catalytic activity">
    <reaction evidence="1">
        <text>a ribonucleoside 5'-diphosphate + H2O = a ribonucleoside 5'-phosphate + phosphate + H(+)</text>
        <dbReference type="Rhea" id="RHEA:36799"/>
        <dbReference type="ChEBI" id="CHEBI:15377"/>
        <dbReference type="ChEBI" id="CHEBI:15378"/>
        <dbReference type="ChEBI" id="CHEBI:43474"/>
        <dbReference type="ChEBI" id="CHEBI:57930"/>
        <dbReference type="ChEBI" id="CHEBI:58043"/>
        <dbReference type="EC" id="3.6.1.6"/>
    </reaction>
</comment>
<comment type="cofactor">
    <cofactor evidence="1">
        <name>Mg(2+)</name>
        <dbReference type="ChEBI" id="CHEBI:18420"/>
    </cofactor>
</comment>
<comment type="similarity">
    <text evidence="1">Belongs to the Ntdp family.</text>
</comment>